<evidence type="ECO:0000255" key="1">
    <source>
        <dbReference type="HAMAP-Rule" id="MF_01020"/>
    </source>
</evidence>
<reference key="1">
    <citation type="journal article" date="2004" name="PLoS Biol.">
        <title>Genomic insights into methanotrophy: the complete genome sequence of Methylococcus capsulatus (Bath).</title>
        <authorList>
            <person name="Ward N.L."/>
            <person name="Larsen O."/>
            <person name="Sakwa J."/>
            <person name="Bruseth L."/>
            <person name="Khouri H.M."/>
            <person name="Durkin A.S."/>
            <person name="Dimitrov G."/>
            <person name="Jiang L."/>
            <person name="Scanlan D."/>
            <person name="Kang K.H."/>
            <person name="Lewis M.R."/>
            <person name="Nelson K.E."/>
            <person name="Methe B.A."/>
            <person name="Wu M."/>
            <person name="Heidelberg J.F."/>
            <person name="Paulsen I.T."/>
            <person name="Fouts D.E."/>
            <person name="Ravel J."/>
            <person name="Tettelin H."/>
            <person name="Ren Q."/>
            <person name="Read T.D."/>
            <person name="DeBoy R.T."/>
            <person name="Seshadri R."/>
            <person name="Salzberg S.L."/>
            <person name="Jensen H.B."/>
            <person name="Birkeland N.K."/>
            <person name="Nelson W.C."/>
            <person name="Dodson R.J."/>
            <person name="Grindhaug S.H."/>
            <person name="Holt I.E."/>
            <person name="Eidhammer I."/>
            <person name="Jonasen I."/>
            <person name="Vanaken S."/>
            <person name="Utterback T.R."/>
            <person name="Feldblyum T.V."/>
            <person name="Fraser C.M."/>
            <person name="Lillehaug J.R."/>
            <person name="Eisen J.A."/>
        </authorList>
    </citation>
    <scope>NUCLEOTIDE SEQUENCE [LARGE SCALE GENOMIC DNA]</scope>
    <source>
        <strain>ATCC 33009 / NCIMB 11132 / Bath</strain>
    </source>
</reference>
<keyword id="KW-0028">Amino-acid biosynthesis</keyword>
<keyword id="KW-0067">ATP-binding</keyword>
<keyword id="KW-0963">Cytoplasm</keyword>
<keyword id="KW-0368">Histidine biosynthesis</keyword>
<keyword id="KW-0378">Hydrolase</keyword>
<keyword id="KW-0547">Nucleotide-binding</keyword>
<keyword id="KW-1185">Reference proteome</keyword>
<gene>
    <name evidence="1" type="primary">hisE</name>
    <name type="ordered locus">MCA2800</name>
</gene>
<dbReference type="EC" id="3.6.1.31" evidence="1"/>
<dbReference type="EMBL" id="AE017282">
    <property type="protein sequence ID" value="AAU91081.1"/>
    <property type="molecule type" value="Genomic_DNA"/>
</dbReference>
<dbReference type="RefSeq" id="WP_010962001.1">
    <property type="nucleotide sequence ID" value="NC_002977.6"/>
</dbReference>
<dbReference type="SMR" id="Q603K5"/>
<dbReference type="STRING" id="243233.MCA2800"/>
<dbReference type="GeneID" id="88224976"/>
<dbReference type="KEGG" id="mca:MCA2800"/>
<dbReference type="eggNOG" id="COG0140">
    <property type="taxonomic scope" value="Bacteria"/>
</dbReference>
<dbReference type="HOGENOM" id="CLU_123337_1_2_6"/>
<dbReference type="UniPathway" id="UPA00031">
    <property type="reaction ID" value="UER00007"/>
</dbReference>
<dbReference type="Proteomes" id="UP000006821">
    <property type="component" value="Chromosome"/>
</dbReference>
<dbReference type="GO" id="GO:0005737">
    <property type="term" value="C:cytoplasm"/>
    <property type="evidence" value="ECO:0007669"/>
    <property type="project" value="UniProtKB-SubCell"/>
</dbReference>
<dbReference type="GO" id="GO:0005524">
    <property type="term" value="F:ATP binding"/>
    <property type="evidence" value="ECO:0007669"/>
    <property type="project" value="UniProtKB-KW"/>
</dbReference>
<dbReference type="GO" id="GO:0004636">
    <property type="term" value="F:phosphoribosyl-ATP diphosphatase activity"/>
    <property type="evidence" value="ECO:0007669"/>
    <property type="project" value="UniProtKB-UniRule"/>
</dbReference>
<dbReference type="GO" id="GO:0000105">
    <property type="term" value="P:L-histidine biosynthetic process"/>
    <property type="evidence" value="ECO:0007669"/>
    <property type="project" value="UniProtKB-UniRule"/>
</dbReference>
<dbReference type="CDD" id="cd11534">
    <property type="entry name" value="NTP-PPase_HisIE_like"/>
    <property type="match status" value="1"/>
</dbReference>
<dbReference type="FunFam" id="1.10.287.1080:FF:000002">
    <property type="entry name" value="Histidine biosynthesis bifunctional protein HisIE"/>
    <property type="match status" value="1"/>
</dbReference>
<dbReference type="Gene3D" id="1.10.287.1080">
    <property type="entry name" value="MazG-like"/>
    <property type="match status" value="1"/>
</dbReference>
<dbReference type="HAMAP" id="MF_01020">
    <property type="entry name" value="HisE"/>
    <property type="match status" value="1"/>
</dbReference>
<dbReference type="InterPro" id="IPR008179">
    <property type="entry name" value="HisE"/>
</dbReference>
<dbReference type="InterPro" id="IPR021130">
    <property type="entry name" value="PRib-ATP_PPHydrolase-like"/>
</dbReference>
<dbReference type="NCBIfam" id="TIGR03188">
    <property type="entry name" value="histidine_hisI"/>
    <property type="match status" value="1"/>
</dbReference>
<dbReference type="NCBIfam" id="NF001611">
    <property type="entry name" value="PRK00400.1-3"/>
    <property type="match status" value="1"/>
</dbReference>
<dbReference type="PANTHER" id="PTHR42945">
    <property type="entry name" value="HISTIDINE BIOSYNTHESIS BIFUNCTIONAL PROTEIN"/>
    <property type="match status" value="1"/>
</dbReference>
<dbReference type="PANTHER" id="PTHR42945:SF9">
    <property type="entry name" value="HISTIDINE BIOSYNTHESIS BIFUNCTIONAL PROTEIN HISIE"/>
    <property type="match status" value="1"/>
</dbReference>
<dbReference type="Pfam" id="PF01503">
    <property type="entry name" value="PRA-PH"/>
    <property type="match status" value="1"/>
</dbReference>
<dbReference type="SUPFAM" id="SSF101386">
    <property type="entry name" value="all-alpha NTP pyrophosphatases"/>
    <property type="match status" value="1"/>
</dbReference>
<comment type="catalytic activity">
    <reaction evidence="1">
        <text>1-(5-phospho-beta-D-ribosyl)-ATP + H2O = 1-(5-phospho-beta-D-ribosyl)-5'-AMP + diphosphate + H(+)</text>
        <dbReference type="Rhea" id="RHEA:22828"/>
        <dbReference type="ChEBI" id="CHEBI:15377"/>
        <dbReference type="ChEBI" id="CHEBI:15378"/>
        <dbReference type="ChEBI" id="CHEBI:33019"/>
        <dbReference type="ChEBI" id="CHEBI:59457"/>
        <dbReference type="ChEBI" id="CHEBI:73183"/>
        <dbReference type="EC" id="3.6.1.31"/>
    </reaction>
</comment>
<comment type="pathway">
    <text evidence="1">Amino-acid biosynthesis; L-histidine biosynthesis; L-histidine from 5-phospho-alpha-D-ribose 1-diphosphate: step 2/9.</text>
</comment>
<comment type="subcellular location">
    <subcellularLocation>
        <location evidence="1">Cytoplasm</location>
    </subcellularLocation>
</comment>
<comment type="similarity">
    <text evidence="1">Belongs to the PRA-PH family.</text>
</comment>
<feature type="chain" id="PRO_0000230178" description="Phosphoribosyl-ATP pyrophosphatase">
    <location>
        <begin position="1"/>
        <end position="105"/>
    </location>
</feature>
<proteinExistence type="inferred from homology"/>
<organism>
    <name type="scientific">Methylococcus capsulatus (strain ATCC 33009 / NCIMB 11132 / Bath)</name>
    <dbReference type="NCBI Taxonomy" id="243233"/>
    <lineage>
        <taxon>Bacteria</taxon>
        <taxon>Pseudomonadati</taxon>
        <taxon>Pseudomonadota</taxon>
        <taxon>Gammaproteobacteria</taxon>
        <taxon>Methylococcales</taxon>
        <taxon>Methylococcaceae</taxon>
        <taxon>Methylococcus</taxon>
    </lineage>
</organism>
<sequence>MDVLHRLAEILEQRKTEAPDKSYAASLYAKGLDTILKKIGEEATETVIAAKDGEPGKIVYEMADLWFHCCVLLAQQGLGPDDVLRELGRRFGMSGLEEKASRKLG</sequence>
<protein>
    <recommendedName>
        <fullName evidence="1">Phosphoribosyl-ATP pyrophosphatase</fullName>
        <shortName evidence="1">PRA-PH</shortName>
        <ecNumber evidence="1">3.6.1.31</ecNumber>
    </recommendedName>
</protein>
<accession>Q603K5</accession>
<name>HIS2_METCA</name>